<reference key="1">
    <citation type="submission" date="2003-03" db="EMBL/GenBank/DDBJ databases">
        <title>African swine fever virus genomes.</title>
        <authorList>
            <person name="Kutish G.F."/>
            <person name="Rock D.L."/>
        </authorList>
    </citation>
    <scope>NUCLEOTIDE SEQUENCE [LARGE SCALE GENOMIC DNA]</scope>
</reference>
<sequence length="243" mass="28613">MKMHIARESIVFLLNKHLQNTILTKKIEQECFLQADTPKKYLQYIKPFLINCMTKNITTDLVMKDSKRLEPYIILEMRDIIQMMFFRTLQKHIFFKKNTDLCTEYAQKIEASCYHYTYQQQEKTFLEEYSTRCGTINHIINCEKKSHQQQDNDALNKLISGELKPEQLVGMTFAELCPSAALKEKTEITLRSQQKVAEKTSQLYKCPNCKQRMCTYREVQTRALDEPSTIFCTCKKCGHEFIG</sequence>
<name>TFIIS_ASFM2</name>
<proteinExistence type="inferred from homology"/>
<keyword id="KW-0479">Metal-binding</keyword>
<keyword id="KW-0804">Transcription</keyword>
<keyword id="KW-0805">Transcription regulation</keyword>
<keyword id="KW-0862">Zinc</keyword>
<keyword id="KW-0863">Zinc-finger</keyword>
<organismHost>
    <name type="scientific">Ornithodoros</name>
    <name type="common">relapsing fever ticks</name>
    <dbReference type="NCBI Taxonomy" id="6937"/>
</organismHost>
<organismHost>
    <name type="scientific">Phacochoerus aethiopicus</name>
    <name type="common">Warthog</name>
    <dbReference type="NCBI Taxonomy" id="85517"/>
</organismHost>
<organismHost>
    <name type="scientific">Phacochoerus africanus</name>
    <name type="common">Warthog</name>
    <dbReference type="NCBI Taxonomy" id="41426"/>
</organismHost>
<organismHost>
    <name type="scientific">Potamochoerus larvatus</name>
    <name type="common">Bushpig</name>
    <dbReference type="NCBI Taxonomy" id="273792"/>
</organismHost>
<organismHost>
    <name type="scientific">Sus scrofa</name>
    <name type="common">Pig</name>
    <dbReference type="NCBI Taxonomy" id="9823"/>
</organismHost>
<feature type="chain" id="PRO_0000355061" description="Transcription factor TFIIS homolog">
    <location>
        <begin position="1"/>
        <end position="243"/>
    </location>
</feature>
<feature type="domain" description="TFIIS central" evidence="4">
    <location>
        <begin position="77"/>
        <end position="201"/>
    </location>
</feature>
<feature type="zinc finger region" description="TFIIS-type" evidence="3">
    <location>
        <begin position="202"/>
        <end position="242"/>
    </location>
</feature>
<feature type="binding site" evidence="3">
    <location>
        <position position="206"/>
    </location>
    <ligand>
        <name>Zn(2+)</name>
        <dbReference type="ChEBI" id="CHEBI:29105"/>
    </ligand>
</feature>
<feature type="binding site" evidence="3">
    <location>
        <position position="209"/>
    </location>
    <ligand>
        <name>Zn(2+)</name>
        <dbReference type="ChEBI" id="CHEBI:29105"/>
    </ligand>
</feature>
<feature type="binding site" evidence="3">
    <location>
        <position position="234"/>
    </location>
    <ligand>
        <name>Zn(2+)</name>
        <dbReference type="ChEBI" id="CHEBI:29105"/>
    </ligand>
</feature>
<feature type="binding site" evidence="3">
    <location>
        <position position="237"/>
    </location>
    <ligand>
        <name>Zn(2+)</name>
        <dbReference type="ChEBI" id="CHEBI:29105"/>
    </ligand>
</feature>
<gene>
    <name type="ordered locus">Mal-147</name>
</gene>
<protein>
    <recommendedName>
        <fullName evidence="2">Transcription factor TFIIS homolog</fullName>
    </recommendedName>
</protein>
<comment type="function">
    <text evidence="1">Putative initiation factor. Necessary for efficient transcription elongation past template-encoded arresting sites.</text>
</comment>
<comment type="similarity">
    <text evidence="5">Belongs to the TFS-II family.</text>
</comment>
<organism>
    <name type="scientific">African swine fever virus (isolate Tick/Malawi/Lil 20-1/1983)</name>
    <name type="common">ASFV</name>
    <dbReference type="NCBI Taxonomy" id="10500"/>
    <lineage>
        <taxon>Viruses</taxon>
        <taxon>Varidnaviria</taxon>
        <taxon>Bamfordvirae</taxon>
        <taxon>Nucleocytoviricota</taxon>
        <taxon>Pokkesviricetes</taxon>
        <taxon>Asfuvirales</taxon>
        <taxon>Asfarviridae</taxon>
        <taxon>Asfivirus</taxon>
        <taxon>African swine fever virus</taxon>
    </lineage>
</organism>
<evidence type="ECO:0000250" key="1">
    <source>
        <dbReference type="UniProtKB" id="P07273"/>
    </source>
</evidence>
<evidence type="ECO:0000250" key="2">
    <source>
        <dbReference type="UniProtKB" id="P27948"/>
    </source>
</evidence>
<evidence type="ECO:0000255" key="3">
    <source>
        <dbReference type="PROSITE-ProRule" id="PRU00472"/>
    </source>
</evidence>
<evidence type="ECO:0000255" key="4">
    <source>
        <dbReference type="PROSITE-ProRule" id="PRU00651"/>
    </source>
</evidence>
<evidence type="ECO:0000305" key="5"/>
<dbReference type="EMBL" id="AY261361">
    <property type="status" value="NOT_ANNOTATED_CDS"/>
    <property type="molecule type" value="Genomic_DNA"/>
</dbReference>
<dbReference type="SMR" id="P0C8F6"/>
<dbReference type="Proteomes" id="UP000000860">
    <property type="component" value="Segment"/>
</dbReference>
<dbReference type="GO" id="GO:0003676">
    <property type="term" value="F:nucleic acid binding"/>
    <property type="evidence" value="ECO:0007669"/>
    <property type="project" value="InterPro"/>
</dbReference>
<dbReference type="GO" id="GO:0008270">
    <property type="term" value="F:zinc ion binding"/>
    <property type="evidence" value="ECO:0007669"/>
    <property type="project" value="UniProtKB-KW"/>
</dbReference>
<dbReference type="GO" id="GO:0006351">
    <property type="term" value="P:DNA-templated transcription"/>
    <property type="evidence" value="ECO:0007669"/>
    <property type="project" value="InterPro"/>
</dbReference>
<dbReference type="Gene3D" id="2.20.25.10">
    <property type="match status" value="1"/>
</dbReference>
<dbReference type="InterPro" id="IPR035100">
    <property type="entry name" value="TF_IIS-typ"/>
</dbReference>
<dbReference type="InterPro" id="IPR003618">
    <property type="entry name" value="TFIIS_cen_dom"/>
</dbReference>
<dbReference type="InterPro" id="IPR001222">
    <property type="entry name" value="Znf_TFIIS"/>
</dbReference>
<dbReference type="Pfam" id="PF01096">
    <property type="entry name" value="Zn_ribbon_TFIIS"/>
    <property type="match status" value="1"/>
</dbReference>
<dbReference type="PIRSF" id="PIRSF006704">
    <property type="entry name" value="TF_IIS"/>
    <property type="match status" value="1"/>
</dbReference>
<dbReference type="SMART" id="SM00510">
    <property type="entry name" value="TFS2M"/>
    <property type="match status" value="1"/>
</dbReference>
<dbReference type="SMART" id="SM00440">
    <property type="entry name" value="ZnF_C2C2"/>
    <property type="match status" value="1"/>
</dbReference>
<dbReference type="SUPFAM" id="SSF57783">
    <property type="entry name" value="Zinc beta-ribbon"/>
    <property type="match status" value="1"/>
</dbReference>
<dbReference type="PROSITE" id="PS51321">
    <property type="entry name" value="TFIIS_CENTRAL"/>
    <property type="match status" value="1"/>
</dbReference>
<dbReference type="PROSITE" id="PS00466">
    <property type="entry name" value="ZF_TFIIS_1"/>
    <property type="match status" value="1"/>
</dbReference>
<dbReference type="PROSITE" id="PS51133">
    <property type="entry name" value="ZF_TFIIS_2"/>
    <property type="match status" value="1"/>
</dbReference>
<accession>P0C8F6</accession>